<keyword id="KW-0413">Isomerase</keyword>
<keyword id="KW-0460">Magnesium</keyword>
<keyword id="KW-0479">Metal-binding</keyword>
<keyword id="KW-0597">Phosphoprotein</keyword>
<keyword id="KW-1185">Reference proteome</keyword>
<dbReference type="EC" id="5.4.2.10" evidence="1"/>
<dbReference type="EMBL" id="CP000489">
    <property type="protein sequence ID" value="ABL68657.1"/>
    <property type="molecule type" value="Genomic_DNA"/>
</dbReference>
<dbReference type="RefSeq" id="WP_011746890.1">
    <property type="nucleotide sequence ID" value="NC_008686.1"/>
</dbReference>
<dbReference type="SMR" id="A1AZG3"/>
<dbReference type="STRING" id="318586.Pden_0545"/>
<dbReference type="EnsemblBacteria" id="ABL68657">
    <property type="protein sequence ID" value="ABL68657"/>
    <property type="gene ID" value="Pden_0545"/>
</dbReference>
<dbReference type="GeneID" id="93451771"/>
<dbReference type="KEGG" id="pde:Pden_0545"/>
<dbReference type="eggNOG" id="COG1109">
    <property type="taxonomic scope" value="Bacteria"/>
</dbReference>
<dbReference type="HOGENOM" id="CLU_016950_7_0_5"/>
<dbReference type="OrthoDB" id="9803322at2"/>
<dbReference type="Proteomes" id="UP000000361">
    <property type="component" value="Chromosome 1"/>
</dbReference>
<dbReference type="GO" id="GO:0005829">
    <property type="term" value="C:cytosol"/>
    <property type="evidence" value="ECO:0007669"/>
    <property type="project" value="TreeGrafter"/>
</dbReference>
<dbReference type="GO" id="GO:0000287">
    <property type="term" value="F:magnesium ion binding"/>
    <property type="evidence" value="ECO:0007669"/>
    <property type="project" value="UniProtKB-UniRule"/>
</dbReference>
<dbReference type="GO" id="GO:0008966">
    <property type="term" value="F:phosphoglucosamine mutase activity"/>
    <property type="evidence" value="ECO:0007669"/>
    <property type="project" value="UniProtKB-UniRule"/>
</dbReference>
<dbReference type="GO" id="GO:0004615">
    <property type="term" value="F:phosphomannomutase activity"/>
    <property type="evidence" value="ECO:0007669"/>
    <property type="project" value="TreeGrafter"/>
</dbReference>
<dbReference type="GO" id="GO:0005975">
    <property type="term" value="P:carbohydrate metabolic process"/>
    <property type="evidence" value="ECO:0007669"/>
    <property type="project" value="InterPro"/>
</dbReference>
<dbReference type="GO" id="GO:0009252">
    <property type="term" value="P:peptidoglycan biosynthetic process"/>
    <property type="evidence" value="ECO:0007669"/>
    <property type="project" value="TreeGrafter"/>
</dbReference>
<dbReference type="GO" id="GO:0006048">
    <property type="term" value="P:UDP-N-acetylglucosamine biosynthetic process"/>
    <property type="evidence" value="ECO:0007669"/>
    <property type="project" value="TreeGrafter"/>
</dbReference>
<dbReference type="CDD" id="cd05802">
    <property type="entry name" value="GlmM"/>
    <property type="match status" value="1"/>
</dbReference>
<dbReference type="FunFam" id="3.30.310.50:FF:000001">
    <property type="entry name" value="Phosphoglucosamine mutase"/>
    <property type="match status" value="1"/>
</dbReference>
<dbReference type="FunFam" id="3.40.120.10:FF:000001">
    <property type="entry name" value="Phosphoglucosamine mutase"/>
    <property type="match status" value="1"/>
</dbReference>
<dbReference type="FunFam" id="3.40.120.10:FF:000003">
    <property type="entry name" value="Phosphoglucosamine mutase"/>
    <property type="match status" value="1"/>
</dbReference>
<dbReference type="Gene3D" id="3.40.120.10">
    <property type="entry name" value="Alpha-D-Glucose-1,6-Bisphosphate, subunit A, domain 3"/>
    <property type="match status" value="3"/>
</dbReference>
<dbReference type="Gene3D" id="3.30.310.50">
    <property type="entry name" value="Alpha-D-phosphohexomutase, C-terminal domain"/>
    <property type="match status" value="1"/>
</dbReference>
<dbReference type="HAMAP" id="MF_01554_B">
    <property type="entry name" value="GlmM_B"/>
    <property type="match status" value="1"/>
</dbReference>
<dbReference type="InterPro" id="IPR005844">
    <property type="entry name" value="A-D-PHexomutase_a/b/a-I"/>
</dbReference>
<dbReference type="InterPro" id="IPR016055">
    <property type="entry name" value="A-D-PHexomutase_a/b/a-I/II/III"/>
</dbReference>
<dbReference type="InterPro" id="IPR005845">
    <property type="entry name" value="A-D-PHexomutase_a/b/a-II"/>
</dbReference>
<dbReference type="InterPro" id="IPR005846">
    <property type="entry name" value="A-D-PHexomutase_a/b/a-III"/>
</dbReference>
<dbReference type="InterPro" id="IPR005843">
    <property type="entry name" value="A-D-PHexomutase_C"/>
</dbReference>
<dbReference type="InterPro" id="IPR036900">
    <property type="entry name" value="A-D-PHexomutase_C_sf"/>
</dbReference>
<dbReference type="InterPro" id="IPR016066">
    <property type="entry name" value="A-D-PHexomutase_CS"/>
</dbReference>
<dbReference type="InterPro" id="IPR005841">
    <property type="entry name" value="Alpha-D-phosphohexomutase_SF"/>
</dbReference>
<dbReference type="InterPro" id="IPR006352">
    <property type="entry name" value="GlmM_bact"/>
</dbReference>
<dbReference type="InterPro" id="IPR050060">
    <property type="entry name" value="Phosphoglucosamine_mutase"/>
</dbReference>
<dbReference type="NCBIfam" id="TIGR01455">
    <property type="entry name" value="glmM"/>
    <property type="match status" value="1"/>
</dbReference>
<dbReference type="NCBIfam" id="NF008139">
    <property type="entry name" value="PRK10887.1"/>
    <property type="match status" value="1"/>
</dbReference>
<dbReference type="PANTHER" id="PTHR42946:SF1">
    <property type="entry name" value="PHOSPHOGLUCOMUTASE (ALPHA-D-GLUCOSE-1,6-BISPHOSPHATE-DEPENDENT)"/>
    <property type="match status" value="1"/>
</dbReference>
<dbReference type="PANTHER" id="PTHR42946">
    <property type="entry name" value="PHOSPHOHEXOSE MUTASE"/>
    <property type="match status" value="1"/>
</dbReference>
<dbReference type="Pfam" id="PF02878">
    <property type="entry name" value="PGM_PMM_I"/>
    <property type="match status" value="1"/>
</dbReference>
<dbReference type="Pfam" id="PF02879">
    <property type="entry name" value="PGM_PMM_II"/>
    <property type="match status" value="1"/>
</dbReference>
<dbReference type="Pfam" id="PF02880">
    <property type="entry name" value="PGM_PMM_III"/>
    <property type="match status" value="1"/>
</dbReference>
<dbReference type="Pfam" id="PF00408">
    <property type="entry name" value="PGM_PMM_IV"/>
    <property type="match status" value="1"/>
</dbReference>
<dbReference type="PRINTS" id="PR00509">
    <property type="entry name" value="PGMPMM"/>
</dbReference>
<dbReference type="SUPFAM" id="SSF55957">
    <property type="entry name" value="Phosphoglucomutase, C-terminal domain"/>
    <property type="match status" value="1"/>
</dbReference>
<dbReference type="SUPFAM" id="SSF53738">
    <property type="entry name" value="Phosphoglucomutase, first 3 domains"/>
    <property type="match status" value="3"/>
</dbReference>
<dbReference type="PROSITE" id="PS00710">
    <property type="entry name" value="PGM_PMM"/>
    <property type="match status" value="1"/>
</dbReference>
<evidence type="ECO:0000255" key="1">
    <source>
        <dbReference type="HAMAP-Rule" id="MF_01554"/>
    </source>
</evidence>
<reference key="1">
    <citation type="submission" date="2006-12" db="EMBL/GenBank/DDBJ databases">
        <title>Complete sequence of chromosome 1 of Paracoccus denitrificans PD1222.</title>
        <authorList>
            <person name="Copeland A."/>
            <person name="Lucas S."/>
            <person name="Lapidus A."/>
            <person name="Barry K."/>
            <person name="Detter J.C."/>
            <person name="Glavina del Rio T."/>
            <person name="Hammon N."/>
            <person name="Israni S."/>
            <person name="Dalin E."/>
            <person name="Tice H."/>
            <person name="Pitluck S."/>
            <person name="Munk A.C."/>
            <person name="Brettin T."/>
            <person name="Bruce D."/>
            <person name="Han C."/>
            <person name="Tapia R."/>
            <person name="Gilna P."/>
            <person name="Schmutz J."/>
            <person name="Larimer F."/>
            <person name="Land M."/>
            <person name="Hauser L."/>
            <person name="Kyrpides N."/>
            <person name="Lykidis A."/>
            <person name="Spiro S."/>
            <person name="Richardson D.J."/>
            <person name="Moir J.W.B."/>
            <person name="Ferguson S.J."/>
            <person name="van Spanning R.J.M."/>
            <person name="Richardson P."/>
        </authorList>
    </citation>
    <scope>NUCLEOTIDE SEQUENCE [LARGE SCALE GENOMIC DNA]</scope>
    <source>
        <strain>Pd 1222</strain>
    </source>
</reference>
<feature type="chain" id="PRO_0000305658" description="Phosphoglucosamine mutase">
    <location>
        <begin position="1"/>
        <end position="447"/>
    </location>
</feature>
<feature type="active site" description="Phosphoserine intermediate" evidence="1">
    <location>
        <position position="103"/>
    </location>
</feature>
<feature type="binding site" description="via phosphate group" evidence="1">
    <location>
        <position position="103"/>
    </location>
    <ligand>
        <name>Mg(2+)</name>
        <dbReference type="ChEBI" id="CHEBI:18420"/>
    </ligand>
</feature>
<feature type="binding site" evidence="1">
    <location>
        <position position="242"/>
    </location>
    <ligand>
        <name>Mg(2+)</name>
        <dbReference type="ChEBI" id="CHEBI:18420"/>
    </ligand>
</feature>
<feature type="binding site" evidence="1">
    <location>
        <position position="244"/>
    </location>
    <ligand>
        <name>Mg(2+)</name>
        <dbReference type="ChEBI" id="CHEBI:18420"/>
    </ligand>
</feature>
<feature type="binding site" evidence="1">
    <location>
        <position position="246"/>
    </location>
    <ligand>
        <name>Mg(2+)</name>
        <dbReference type="ChEBI" id="CHEBI:18420"/>
    </ligand>
</feature>
<feature type="modified residue" description="Phosphoserine" evidence="1">
    <location>
        <position position="103"/>
    </location>
</feature>
<name>GLMM_PARDP</name>
<gene>
    <name evidence="1" type="primary">glmM</name>
    <name type="ordered locus">Pden_0545</name>
</gene>
<sequence length="447" mass="47570">MSRKLFGTDGVRGRANTHPMTAEMALRLGAAAGRYFRRSGEDHHRVVIGKDTRLSGYMLENALTAGLTSTGMNVLLLGPVPTPAVGYLTRSMRADVGIMISASHNPAHDNGIKFFGPDGFKLSDEAEARIEAIVAGEIIPAQPQNIGRAKRIDDGRGRYVEYAKTTFPSGQRLEGLKVVVDCANGAAYRAAPDVLWELGAEVIPLGVSPNGHNINDGLGSTHPEACARAVLEHGADMGISLDGDADRVMIVDEKGQVADGDQIMALLAARWAAQGRLRGGALVATVMSNLGLERFLQGRGLRLERTAVGDRYVVERMRGAGFNLGGEQSGHIVMTDYATTGDGLIASLQFLAALSDSGQRASELVAQFEPVPQLLKNVRYAVGADPLSKDSVQAEIARAEARLNGSGRVLIRKSGTEPLIRVMAEAEDETVLREVVEDIVAAVEKAA</sequence>
<organism>
    <name type="scientific">Paracoccus denitrificans (strain Pd 1222)</name>
    <dbReference type="NCBI Taxonomy" id="318586"/>
    <lineage>
        <taxon>Bacteria</taxon>
        <taxon>Pseudomonadati</taxon>
        <taxon>Pseudomonadota</taxon>
        <taxon>Alphaproteobacteria</taxon>
        <taxon>Rhodobacterales</taxon>
        <taxon>Paracoccaceae</taxon>
        <taxon>Paracoccus</taxon>
    </lineage>
</organism>
<accession>A1AZG3</accession>
<protein>
    <recommendedName>
        <fullName evidence="1">Phosphoglucosamine mutase</fullName>
        <ecNumber evidence="1">5.4.2.10</ecNumber>
    </recommendedName>
</protein>
<comment type="function">
    <text evidence="1">Catalyzes the conversion of glucosamine-6-phosphate to glucosamine-1-phosphate.</text>
</comment>
<comment type="catalytic activity">
    <reaction evidence="1">
        <text>alpha-D-glucosamine 1-phosphate = D-glucosamine 6-phosphate</text>
        <dbReference type="Rhea" id="RHEA:23424"/>
        <dbReference type="ChEBI" id="CHEBI:58516"/>
        <dbReference type="ChEBI" id="CHEBI:58725"/>
        <dbReference type="EC" id="5.4.2.10"/>
    </reaction>
</comment>
<comment type="cofactor">
    <cofactor evidence="1">
        <name>Mg(2+)</name>
        <dbReference type="ChEBI" id="CHEBI:18420"/>
    </cofactor>
    <text evidence="1">Binds 1 Mg(2+) ion per subunit.</text>
</comment>
<comment type="PTM">
    <text evidence="1">Activated by phosphorylation.</text>
</comment>
<comment type="similarity">
    <text evidence="1">Belongs to the phosphohexose mutase family.</text>
</comment>
<proteinExistence type="inferred from homology"/>